<protein>
    <recommendedName>
        <fullName evidence="1">Small ribosomal subunit protein bS20</fullName>
    </recommendedName>
    <alternativeName>
        <fullName evidence="3">30S ribosomal protein S20</fullName>
    </alternativeName>
</protein>
<feature type="chain" id="PRO_1000126414" description="Small ribosomal subunit protein bS20">
    <location>
        <begin position="1"/>
        <end position="92"/>
    </location>
</feature>
<feature type="region of interest" description="Disordered" evidence="2">
    <location>
        <begin position="1"/>
        <end position="25"/>
    </location>
</feature>
<dbReference type="EMBL" id="CP001052">
    <property type="protein sequence ID" value="ACD17595.1"/>
    <property type="molecule type" value="Genomic_DNA"/>
</dbReference>
<dbReference type="RefSeq" id="WP_012434165.1">
    <property type="nucleotide sequence ID" value="NC_010681.1"/>
</dbReference>
<dbReference type="SMR" id="B2SY60"/>
<dbReference type="STRING" id="398527.Bphyt_3203"/>
<dbReference type="GeneID" id="97308971"/>
<dbReference type="KEGG" id="bpy:Bphyt_3203"/>
<dbReference type="eggNOG" id="COG0268">
    <property type="taxonomic scope" value="Bacteria"/>
</dbReference>
<dbReference type="HOGENOM" id="CLU_160655_4_0_4"/>
<dbReference type="OrthoDB" id="9807974at2"/>
<dbReference type="Proteomes" id="UP000001739">
    <property type="component" value="Chromosome 1"/>
</dbReference>
<dbReference type="GO" id="GO:0005829">
    <property type="term" value="C:cytosol"/>
    <property type="evidence" value="ECO:0007669"/>
    <property type="project" value="TreeGrafter"/>
</dbReference>
<dbReference type="GO" id="GO:0015935">
    <property type="term" value="C:small ribosomal subunit"/>
    <property type="evidence" value="ECO:0007669"/>
    <property type="project" value="TreeGrafter"/>
</dbReference>
<dbReference type="GO" id="GO:0070181">
    <property type="term" value="F:small ribosomal subunit rRNA binding"/>
    <property type="evidence" value="ECO:0007669"/>
    <property type="project" value="TreeGrafter"/>
</dbReference>
<dbReference type="GO" id="GO:0003735">
    <property type="term" value="F:structural constituent of ribosome"/>
    <property type="evidence" value="ECO:0007669"/>
    <property type="project" value="InterPro"/>
</dbReference>
<dbReference type="GO" id="GO:0006412">
    <property type="term" value="P:translation"/>
    <property type="evidence" value="ECO:0007669"/>
    <property type="project" value="UniProtKB-UniRule"/>
</dbReference>
<dbReference type="FunFam" id="1.20.58.110:FF:000001">
    <property type="entry name" value="30S ribosomal protein S20"/>
    <property type="match status" value="1"/>
</dbReference>
<dbReference type="Gene3D" id="1.20.58.110">
    <property type="entry name" value="Ribosomal protein S20"/>
    <property type="match status" value="1"/>
</dbReference>
<dbReference type="HAMAP" id="MF_00500">
    <property type="entry name" value="Ribosomal_bS20"/>
    <property type="match status" value="1"/>
</dbReference>
<dbReference type="InterPro" id="IPR002583">
    <property type="entry name" value="Ribosomal_bS20"/>
</dbReference>
<dbReference type="InterPro" id="IPR036510">
    <property type="entry name" value="Ribosomal_bS20_sf"/>
</dbReference>
<dbReference type="NCBIfam" id="TIGR00029">
    <property type="entry name" value="S20"/>
    <property type="match status" value="1"/>
</dbReference>
<dbReference type="PANTHER" id="PTHR33398">
    <property type="entry name" value="30S RIBOSOMAL PROTEIN S20"/>
    <property type="match status" value="1"/>
</dbReference>
<dbReference type="PANTHER" id="PTHR33398:SF1">
    <property type="entry name" value="SMALL RIBOSOMAL SUBUNIT PROTEIN BS20C"/>
    <property type="match status" value="1"/>
</dbReference>
<dbReference type="Pfam" id="PF01649">
    <property type="entry name" value="Ribosomal_S20p"/>
    <property type="match status" value="1"/>
</dbReference>
<dbReference type="SUPFAM" id="SSF46992">
    <property type="entry name" value="Ribosomal protein S20"/>
    <property type="match status" value="1"/>
</dbReference>
<name>RS20_PARPJ</name>
<comment type="function">
    <text evidence="1">Binds directly to 16S ribosomal RNA.</text>
</comment>
<comment type="similarity">
    <text evidence="1">Belongs to the bacterial ribosomal protein bS20 family.</text>
</comment>
<organism>
    <name type="scientific">Paraburkholderia phytofirmans (strain DSM 17436 / LMG 22146 / PsJN)</name>
    <name type="common">Burkholderia phytofirmans</name>
    <dbReference type="NCBI Taxonomy" id="398527"/>
    <lineage>
        <taxon>Bacteria</taxon>
        <taxon>Pseudomonadati</taxon>
        <taxon>Pseudomonadota</taxon>
        <taxon>Betaproteobacteria</taxon>
        <taxon>Burkholderiales</taxon>
        <taxon>Burkholderiaceae</taxon>
        <taxon>Paraburkholderia</taxon>
    </lineage>
</organism>
<proteinExistence type="inferred from homology"/>
<evidence type="ECO:0000255" key="1">
    <source>
        <dbReference type="HAMAP-Rule" id="MF_00500"/>
    </source>
</evidence>
<evidence type="ECO:0000256" key="2">
    <source>
        <dbReference type="SAM" id="MobiDB-lite"/>
    </source>
</evidence>
<evidence type="ECO:0000305" key="3"/>
<keyword id="KW-0687">Ribonucleoprotein</keyword>
<keyword id="KW-0689">Ribosomal protein</keyword>
<keyword id="KW-0694">RNA-binding</keyword>
<keyword id="KW-0699">rRNA-binding</keyword>
<gene>
    <name evidence="1" type="primary">rpsT</name>
    <name type="ordered locus">Bphyt_3203</name>
</gene>
<accession>B2SY60</accession>
<reference key="1">
    <citation type="journal article" date="2011" name="J. Bacteriol.">
        <title>Complete genome sequence of the plant growth-promoting endophyte Burkholderia phytofirmans strain PsJN.</title>
        <authorList>
            <person name="Weilharter A."/>
            <person name="Mitter B."/>
            <person name="Shin M.V."/>
            <person name="Chain P.S."/>
            <person name="Nowak J."/>
            <person name="Sessitsch A."/>
        </authorList>
    </citation>
    <scope>NUCLEOTIDE SEQUENCE [LARGE SCALE GENOMIC DNA]</scope>
    <source>
        <strain>DSM 17436 / LMG 22146 / PsJN</strain>
    </source>
</reference>
<sequence>MANSAQARKRARQAAKANSHNSALRSKFRTAIKAVRKAIDAGDKAKAAEIFQASSKTIDIIADKNIVHKNKAARHKSRLAAAIKGLQASAAQ</sequence>